<proteinExistence type="predicted"/>
<evidence type="ECO:0000255" key="1"/>
<evidence type="ECO:0000256" key="2">
    <source>
        <dbReference type="SAM" id="MobiDB-lite"/>
    </source>
</evidence>
<accession>Q76NV7</accession>
<accession>Q54ZM9</accession>
<keyword id="KW-0175">Coiled coil</keyword>
<keyword id="KW-1185">Reference proteome</keyword>
<reference key="1">
    <citation type="journal article" date="2002" name="Nature">
        <title>Sequence and analysis of chromosome 2 of Dictyostelium discoideum.</title>
        <authorList>
            <person name="Gloeckner G."/>
            <person name="Eichinger L."/>
            <person name="Szafranski K."/>
            <person name="Pachebat J.A."/>
            <person name="Bankier A.T."/>
            <person name="Dear P.H."/>
            <person name="Lehmann R."/>
            <person name="Baumgart C."/>
            <person name="Parra G."/>
            <person name="Abril J.F."/>
            <person name="Guigo R."/>
            <person name="Kumpf K."/>
            <person name="Tunggal B."/>
            <person name="Cox E.C."/>
            <person name="Quail M.A."/>
            <person name="Platzer M."/>
            <person name="Rosenthal A."/>
            <person name="Noegel A.A."/>
        </authorList>
    </citation>
    <scope>NUCLEOTIDE SEQUENCE [LARGE SCALE GENOMIC DNA]</scope>
    <source>
        <strain>AX4</strain>
    </source>
</reference>
<reference key="2">
    <citation type="journal article" date="2005" name="Nature">
        <title>The genome of the social amoeba Dictyostelium discoideum.</title>
        <authorList>
            <person name="Eichinger L."/>
            <person name="Pachebat J.A."/>
            <person name="Gloeckner G."/>
            <person name="Rajandream M.A."/>
            <person name="Sucgang R."/>
            <person name="Berriman M."/>
            <person name="Song J."/>
            <person name="Olsen R."/>
            <person name="Szafranski K."/>
            <person name="Xu Q."/>
            <person name="Tunggal B."/>
            <person name="Kummerfeld S."/>
            <person name="Madera M."/>
            <person name="Konfortov B.A."/>
            <person name="Rivero F."/>
            <person name="Bankier A.T."/>
            <person name="Lehmann R."/>
            <person name="Hamlin N."/>
            <person name="Davies R."/>
            <person name="Gaudet P."/>
            <person name="Fey P."/>
            <person name="Pilcher K."/>
            <person name="Chen G."/>
            <person name="Saunders D."/>
            <person name="Sodergren E.J."/>
            <person name="Davis P."/>
            <person name="Kerhornou A."/>
            <person name="Nie X."/>
            <person name="Hall N."/>
            <person name="Anjard C."/>
            <person name="Hemphill L."/>
            <person name="Bason N."/>
            <person name="Farbrother P."/>
            <person name="Desany B."/>
            <person name="Just E."/>
            <person name="Morio T."/>
            <person name="Rost R."/>
            <person name="Churcher C.M."/>
            <person name="Cooper J."/>
            <person name="Haydock S."/>
            <person name="van Driessche N."/>
            <person name="Cronin A."/>
            <person name="Goodhead I."/>
            <person name="Muzny D.M."/>
            <person name="Mourier T."/>
            <person name="Pain A."/>
            <person name="Lu M."/>
            <person name="Harper D."/>
            <person name="Lindsay R."/>
            <person name="Hauser H."/>
            <person name="James K.D."/>
            <person name="Quiles M."/>
            <person name="Madan Babu M."/>
            <person name="Saito T."/>
            <person name="Buchrieser C."/>
            <person name="Wardroper A."/>
            <person name="Felder M."/>
            <person name="Thangavelu M."/>
            <person name="Johnson D."/>
            <person name="Knights A."/>
            <person name="Loulseged H."/>
            <person name="Mungall K.L."/>
            <person name="Oliver K."/>
            <person name="Price C."/>
            <person name="Quail M.A."/>
            <person name="Urushihara H."/>
            <person name="Hernandez J."/>
            <person name="Rabbinowitsch E."/>
            <person name="Steffen D."/>
            <person name="Sanders M."/>
            <person name="Ma J."/>
            <person name="Kohara Y."/>
            <person name="Sharp S."/>
            <person name="Simmonds M.N."/>
            <person name="Spiegler S."/>
            <person name="Tivey A."/>
            <person name="Sugano S."/>
            <person name="White B."/>
            <person name="Walker D."/>
            <person name="Woodward J.R."/>
            <person name="Winckler T."/>
            <person name="Tanaka Y."/>
            <person name="Shaulsky G."/>
            <person name="Schleicher M."/>
            <person name="Weinstock G.M."/>
            <person name="Rosenthal A."/>
            <person name="Cox E.C."/>
            <person name="Chisholm R.L."/>
            <person name="Gibbs R.A."/>
            <person name="Loomis W.F."/>
            <person name="Platzer M."/>
            <person name="Kay R.R."/>
            <person name="Williams J.G."/>
            <person name="Dear P.H."/>
            <person name="Noegel A.A."/>
            <person name="Barrell B.G."/>
            <person name="Kuspa A."/>
        </authorList>
    </citation>
    <scope>NUCLEOTIDE SEQUENCE [LARGE SCALE GENOMIC DNA]</scope>
    <source>
        <strain>AX4</strain>
    </source>
</reference>
<gene>
    <name type="ORF">DDB_G0277499</name>
</gene>
<dbReference type="EMBL" id="AAFI02000020">
    <property type="protein sequence ID" value="EAL68712.1"/>
    <property type="molecule type" value="Genomic_DNA"/>
</dbReference>
<dbReference type="RefSeq" id="XP_642613.1">
    <property type="nucleotide sequence ID" value="XM_637521.1"/>
</dbReference>
<dbReference type="SMR" id="Q76NV7"/>
<dbReference type="PaxDb" id="44689-DDB0305127"/>
<dbReference type="EnsemblProtists" id="EAL68712">
    <property type="protein sequence ID" value="EAL68712"/>
    <property type="gene ID" value="DDB_G0277499"/>
</dbReference>
<dbReference type="GeneID" id="8621030"/>
<dbReference type="KEGG" id="ddi:DDB_G0277499"/>
<dbReference type="dictyBase" id="DDB_G0277499"/>
<dbReference type="HOGENOM" id="CLU_3110392_0_0_1"/>
<dbReference type="InParanoid" id="Q76NV7"/>
<dbReference type="PRO" id="PR:Q76NV7"/>
<dbReference type="Proteomes" id="UP000002195">
    <property type="component" value="Chromosome 2"/>
</dbReference>
<name>Y9216_DICDI</name>
<organism>
    <name type="scientific">Dictyostelium discoideum</name>
    <name type="common">Social amoeba</name>
    <dbReference type="NCBI Taxonomy" id="44689"/>
    <lineage>
        <taxon>Eukaryota</taxon>
        <taxon>Amoebozoa</taxon>
        <taxon>Evosea</taxon>
        <taxon>Eumycetozoa</taxon>
        <taxon>Dictyostelia</taxon>
        <taxon>Dictyosteliales</taxon>
        <taxon>Dictyosteliaceae</taxon>
        <taxon>Dictyostelium</taxon>
    </lineage>
</organism>
<protein>
    <recommendedName>
        <fullName>Putative uncharacterized protein DDB_G0277499</fullName>
    </recommendedName>
</protein>
<feature type="chain" id="PRO_0000348179" description="Putative uncharacterized protein DDB_G0277499">
    <location>
        <begin position="1"/>
        <end position="51"/>
    </location>
</feature>
<feature type="region of interest" description="Disordered" evidence="2">
    <location>
        <begin position="1"/>
        <end position="28"/>
    </location>
</feature>
<feature type="coiled-coil region" evidence="1">
    <location>
        <begin position="13"/>
        <end position="47"/>
    </location>
</feature>
<sequence length="51" mass="6014">MQQPQNITTSSISNNNNNNTSLTLQQQQEQLQQLQIKRKRNLMKQLQHVSH</sequence>